<reference key="1">
    <citation type="journal article" date="2016" name="Genome Announc.">
        <title>Complete genome sequence of Alkaliphilus metalliredigens strain QYMF, an alkaliphilic and metal-reducing bacterium isolated from borax-contaminated leachate ponds.</title>
        <authorList>
            <person name="Hwang C."/>
            <person name="Copeland A."/>
            <person name="Lucas S."/>
            <person name="Lapidus A."/>
            <person name="Barry K."/>
            <person name="Detter J.C."/>
            <person name="Glavina Del Rio T."/>
            <person name="Hammon N."/>
            <person name="Israni S."/>
            <person name="Dalin E."/>
            <person name="Tice H."/>
            <person name="Pitluck S."/>
            <person name="Chertkov O."/>
            <person name="Brettin T."/>
            <person name="Bruce D."/>
            <person name="Han C."/>
            <person name="Schmutz J."/>
            <person name="Larimer F."/>
            <person name="Land M.L."/>
            <person name="Hauser L."/>
            <person name="Kyrpides N."/>
            <person name="Mikhailova N."/>
            <person name="Ye Q."/>
            <person name="Zhou J."/>
            <person name="Richardson P."/>
            <person name="Fields M.W."/>
        </authorList>
    </citation>
    <scope>NUCLEOTIDE SEQUENCE [LARGE SCALE GENOMIC DNA]</scope>
    <source>
        <strain>QYMF</strain>
    </source>
</reference>
<proteinExistence type="inferred from homology"/>
<dbReference type="EMBL" id="CP000724">
    <property type="protein sequence ID" value="ABR50531.1"/>
    <property type="molecule type" value="Genomic_DNA"/>
</dbReference>
<dbReference type="RefSeq" id="WP_012065422.1">
    <property type="nucleotide sequence ID" value="NC_009633.1"/>
</dbReference>
<dbReference type="SMR" id="A6TWG3"/>
<dbReference type="STRING" id="293826.Amet_4459"/>
<dbReference type="KEGG" id="amt:Amet_4459"/>
<dbReference type="eggNOG" id="COG0200">
    <property type="taxonomic scope" value="Bacteria"/>
</dbReference>
<dbReference type="HOGENOM" id="CLU_055188_4_2_9"/>
<dbReference type="OrthoDB" id="9810293at2"/>
<dbReference type="Proteomes" id="UP000001572">
    <property type="component" value="Chromosome"/>
</dbReference>
<dbReference type="GO" id="GO:0022625">
    <property type="term" value="C:cytosolic large ribosomal subunit"/>
    <property type="evidence" value="ECO:0007669"/>
    <property type="project" value="TreeGrafter"/>
</dbReference>
<dbReference type="GO" id="GO:0019843">
    <property type="term" value="F:rRNA binding"/>
    <property type="evidence" value="ECO:0007669"/>
    <property type="project" value="UniProtKB-UniRule"/>
</dbReference>
<dbReference type="GO" id="GO:0003735">
    <property type="term" value="F:structural constituent of ribosome"/>
    <property type="evidence" value="ECO:0007669"/>
    <property type="project" value="InterPro"/>
</dbReference>
<dbReference type="GO" id="GO:0006412">
    <property type="term" value="P:translation"/>
    <property type="evidence" value="ECO:0007669"/>
    <property type="project" value="UniProtKB-UniRule"/>
</dbReference>
<dbReference type="Gene3D" id="3.100.10.10">
    <property type="match status" value="1"/>
</dbReference>
<dbReference type="HAMAP" id="MF_01341">
    <property type="entry name" value="Ribosomal_uL15"/>
    <property type="match status" value="1"/>
</dbReference>
<dbReference type="InterPro" id="IPR030878">
    <property type="entry name" value="Ribosomal_uL15"/>
</dbReference>
<dbReference type="InterPro" id="IPR021131">
    <property type="entry name" value="Ribosomal_uL15/eL18"/>
</dbReference>
<dbReference type="InterPro" id="IPR036227">
    <property type="entry name" value="Ribosomal_uL15/eL18_sf"/>
</dbReference>
<dbReference type="InterPro" id="IPR005749">
    <property type="entry name" value="Ribosomal_uL15_bac-type"/>
</dbReference>
<dbReference type="InterPro" id="IPR001196">
    <property type="entry name" value="Ribosomal_uL15_CS"/>
</dbReference>
<dbReference type="NCBIfam" id="TIGR01071">
    <property type="entry name" value="rplO_bact"/>
    <property type="match status" value="1"/>
</dbReference>
<dbReference type="PANTHER" id="PTHR12934">
    <property type="entry name" value="50S RIBOSOMAL PROTEIN L15"/>
    <property type="match status" value="1"/>
</dbReference>
<dbReference type="PANTHER" id="PTHR12934:SF11">
    <property type="entry name" value="LARGE RIBOSOMAL SUBUNIT PROTEIN UL15M"/>
    <property type="match status" value="1"/>
</dbReference>
<dbReference type="Pfam" id="PF00828">
    <property type="entry name" value="Ribosomal_L27A"/>
    <property type="match status" value="1"/>
</dbReference>
<dbReference type="SUPFAM" id="SSF52080">
    <property type="entry name" value="Ribosomal proteins L15p and L18e"/>
    <property type="match status" value="1"/>
</dbReference>
<dbReference type="PROSITE" id="PS00475">
    <property type="entry name" value="RIBOSOMAL_L15"/>
    <property type="match status" value="1"/>
</dbReference>
<organism>
    <name type="scientific">Alkaliphilus metalliredigens (strain QYMF)</name>
    <dbReference type="NCBI Taxonomy" id="293826"/>
    <lineage>
        <taxon>Bacteria</taxon>
        <taxon>Bacillati</taxon>
        <taxon>Bacillota</taxon>
        <taxon>Clostridia</taxon>
        <taxon>Peptostreptococcales</taxon>
        <taxon>Natronincolaceae</taxon>
        <taxon>Alkaliphilus</taxon>
    </lineage>
</organism>
<protein>
    <recommendedName>
        <fullName evidence="1">Large ribosomal subunit protein uL15</fullName>
    </recommendedName>
    <alternativeName>
        <fullName evidence="3">50S ribosomal protein L15</fullName>
    </alternativeName>
</protein>
<gene>
    <name evidence="1" type="primary">rplO</name>
    <name type="ordered locus">Amet_4459</name>
</gene>
<comment type="function">
    <text evidence="1">Binds to the 23S rRNA.</text>
</comment>
<comment type="subunit">
    <text evidence="1">Part of the 50S ribosomal subunit.</text>
</comment>
<comment type="similarity">
    <text evidence="1">Belongs to the universal ribosomal protein uL15 family.</text>
</comment>
<evidence type="ECO:0000255" key="1">
    <source>
        <dbReference type="HAMAP-Rule" id="MF_01341"/>
    </source>
</evidence>
<evidence type="ECO:0000256" key="2">
    <source>
        <dbReference type="SAM" id="MobiDB-lite"/>
    </source>
</evidence>
<evidence type="ECO:0000305" key="3"/>
<keyword id="KW-1185">Reference proteome</keyword>
<keyword id="KW-0687">Ribonucleoprotein</keyword>
<keyword id="KW-0689">Ribosomal protein</keyword>
<keyword id="KW-0694">RNA-binding</keyword>
<keyword id="KW-0699">rRNA-binding</keyword>
<sequence>MKLHELKPAKGAVKEVKRKGRGRATGNGKTAGRGHNGQNSRSGGGVRIGFEGGQMPLARRLPKRGFTNIFAKVYNEVNVDVLNKFEDGTTITPEFLKEMGVIKQIEKNGVKILGNGNLEKNLTIKAQKFTKSAAEKIEAAGGKAEVI</sequence>
<accession>A6TWG3</accession>
<feature type="chain" id="PRO_1000067659" description="Large ribosomal subunit protein uL15">
    <location>
        <begin position="1"/>
        <end position="147"/>
    </location>
</feature>
<feature type="region of interest" description="Disordered" evidence="2">
    <location>
        <begin position="1"/>
        <end position="47"/>
    </location>
</feature>
<feature type="compositionally biased region" description="Basic and acidic residues" evidence="2">
    <location>
        <begin position="1"/>
        <end position="15"/>
    </location>
</feature>
<feature type="compositionally biased region" description="Gly residues" evidence="2">
    <location>
        <begin position="23"/>
        <end position="35"/>
    </location>
</feature>
<name>RL15_ALKMQ</name>